<feature type="chain" id="PRO_1000088219" description="Chromosome partition protein MukB">
    <location>
        <begin position="1"/>
        <end position="1486"/>
    </location>
</feature>
<feature type="region of interest" description="Flexible hinge" evidence="1">
    <location>
        <begin position="666"/>
        <end position="783"/>
    </location>
</feature>
<feature type="coiled-coil region" evidence="1">
    <location>
        <begin position="326"/>
        <end position="418"/>
    </location>
</feature>
<feature type="coiled-coil region" evidence="1">
    <location>
        <begin position="444"/>
        <end position="480"/>
    </location>
</feature>
<feature type="coiled-coil region" evidence="1">
    <location>
        <begin position="509"/>
        <end position="603"/>
    </location>
</feature>
<feature type="coiled-coil region" evidence="1">
    <location>
        <begin position="835"/>
        <end position="923"/>
    </location>
</feature>
<feature type="coiled-coil region" evidence="1">
    <location>
        <begin position="977"/>
        <end position="1115"/>
    </location>
</feature>
<feature type="coiled-coil region" evidence="1">
    <location>
        <begin position="1209"/>
        <end position="1266"/>
    </location>
</feature>
<feature type="binding site" evidence="1">
    <location>
        <begin position="34"/>
        <end position="41"/>
    </location>
    <ligand>
        <name>ATP</name>
        <dbReference type="ChEBI" id="CHEBI:30616"/>
    </ligand>
</feature>
<dbReference type="EMBL" id="CP000946">
    <property type="protein sequence ID" value="ACA78301.1"/>
    <property type="molecule type" value="Genomic_DNA"/>
</dbReference>
<dbReference type="RefSeq" id="WP_000572670.1">
    <property type="nucleotide sequence ID" value="NZ_MTFT01000009.1"/>
</dbReference>
<dbReference type="SMR" id="B1IW07"/>
<dbReference type="KEGG" id="ecl:EcolC_2672"/>
<dbReference type="HOGENOM" id="CLU_004430_0_0_6"/>
<dbReference type="GO" id="GO:0005737">
    <property type="term" value="C:cytoplasm"/>
    <property type="evidence" value="ECO:0007669"/>
    <property type="project" value="UniProtKB-UniRule"/>
</dbReference>
<dbReference type="GO" id="GO:0009295">
    <property type="term" value="C:nucleoid"/>
    <property type="evidence" value="ECO:0007669"/>
    <property type="project" value="UniProtKB-SubCell"/>
</dbReference>
<dbReference type="GO" id="GO:0005524">
    <property type="term" value="F:ATP binding"/>
    <property type="evidence" value="ECO:0007669"/>
    <property type="project" value="UniProtKB-UniRule"/>
</dbReference>
<dbReference type="GO" id="GO:0003677">
    <property type="term" value="F:DNA binding"/>
    <property type="evidence" value="ECO:0007669"/>
    <property type="project" value="UniProtKB-UniRule"/>
</dbReference>
<dbReference type="GO" id="GO:0051301">
    <property type="term" value="P:cell division"/>
    <property type="evidence" value="ECO:0007669"/>
    <property type="project" value="UniProtKB-KW"/>
</dbReference>
<dbReference type="GO" id="GO:0030261">
    <property type="term" value="P:chromosome condensation"/>
    <property type="evidence" value="ECO:0007669"/>
    <property type="project" value="UniProtKB-KW"/>
</dbReference>
<dbReference type="GO" id="GO:0007059">
    <property type="term" value="P:chromosome segregation"/>
    <property type="evidence" value="ECO:0007669"/>
    <property type="project" value="UniProtKB-UniRule"/>
</dbReference>
<dbReference type="GO" id="GO:0006260">
    <property type="term" value="P:DNA replication"/>
    <property type="evidence" value="ECO:0007669"/>
    <property type="project" value="UniProtKB-UniRule"/>
</dbReference>
<dbReference type="FunFam" id="1.20.58.850:FF:000001">
    <property type="entry name" value="Chromosome partition protein MukB"/>
    <property type="match status" value="1"/>
</dbReference>
<dbReference type="FunFam" id="3.30.70.3500:FF:000001">
    <property type="entry name" value="Chromosome partition protein MukB"/>
    <property type="match status" value="1"/>
</dbReference>
<dbReference type="FunFam" id="3.40.1140.10:FF:000001">
    <property type="entry name" value="Chromosome partition protein MukB"/>
    <property type="match status" value="1"/>
</dbReference>
<dbReference type="FunFam" id="3.40.1140.10:FF:000002">
    <property type="entry name" value="Chromosome partition protein MukB"/>
    <property type="match status" value="1"/>
</dbReference>
<dbReference type="Gene3D" id="1.20.58.850">
    <property type="match status" value="1"/>
</dbReference>
<dbReference type="Gene3D" id="3.40.1140.10">
    <property type="match status" value="2"/>
</dbReference>
<dbReference type="Gene3D" id="1.20.5.420">
    <property type="entry name" value="Immunoglobulin FC, subunit C"/>
    <property type="match status" value="1"/>
</dbReference>
<dbReference type="Gene3D" id="3.30.70.3500">
    <property type="entry name" value="MukB, hinge domain"/>
    <property type="match status" value="1"/>
</dbReference>
<dbReference type="HAMAP" id="MF_01800">
    <property type="entry name" value="MukB"/>
    <property type="match status" value="1"/>
</dbReference>
<dbReference type="InterPro" id="IPR012090">
    <property type="entry name" value="MukB"/>
</dbReference>
<dbReference type="InterPro" id="IPR050308">
    <property type="entry name" value="MukB/SMC"/>
</dbReference>
<dbReference type="InterPro" id="IPR032520">
    <property type="entry name" value="MukB_hinge"/>
</dbReference>
<dbReference type="InterPro" id="IPR042501">
    <property type="entry name" value="MukB_hinge_sf"/>
</dbReference>
<dbReference type="InterPro" id="IPR007406">
    <property type="entry name" value="MukB_N_dom"/>
</dbReference>
<dbReference type="InterPro" id="IPR027417">
    <property type="entry name" value="P-loop_NTPase"/>
</dbReference>
<dbReference type="NCBIfam" id="NF003422">
    <property type="entry name" value="PRK04863.1"/>
    <property type="match status" value="1"/>
</dbReference>
<dbReference type="PANTHER" id="PTHR42963">
    <property type="entry name" value="CHROMOSOME PARTITION PROTEIN MUKB"/>
    <property type="match status" value="1"/>
</dbReference>
<dbReference type="PANTHER" id="PTHR42963:SF1">
    <property type="entry name" value="DUF4476 DOMAIN-CONTAINING PROTEIN"/>
    <property type="match status" value="1"/>
</dbReference>
<dbReference type="Pfam" id="PF04310">
    <property type="entry name" value="MukB"/>
    <property type="match status" value="1"/>
</dbReference>
<dbReference type="Pfam" id="PF16330">
    <property type="entry name" value="MukB_hinge"/>
    <property type="match status" value="1"/>
</dbReference>
<dbReference type="Pfam" id="PF13558">
    <property type="entry name" value="SbcC_Walker_B"/>
    <property type="match status" value="1"/>
</dbReference>
<dbReference type="PIRSF" id="PIRSF005246">
    <property type="entry name" value="MukB"/>
    <property type="match status" value="1"/>
</dbReference>
<dbReference type="SUPFAM" id="SSF52540">
    <property type="entry name" value="P-loop containing nucleoside triphosphate hydrolases"/>
    <property type="match status" value="2"/>
</dbReference>
<evidence type="ECO:0000255" key="1">
    <source>
        <dbReference type="HAMAP-Rule" id="MF_01800"/>
    </source>
</evidence>
<protein>
    <recommendedName>
        <fullName evidence="1">Chromosome partition protein MukB</fullName>
    </recommendedName>
    <alternativeName>
        <fullName evidence="1">Structural maintenance of chromosome-related protein</fullName>
    </alternativeName>
</protein>
<name>MUKB_ECOLC</name>
<sequence>MIERGKFRSLTLINWNGFFARTFDLDELVTTLSGGNGAGKSTTMAAFVTALIPDLTLLHFRNTTEAGATSGSRDKGLHGKLKAGVCYSMLDTINSRHQRVVVGVRLQQVAGRDRKVDIKPFAIQGLPMSVQPTQLVTETLNERQARVLPLNELKDKLEAMEGVQFKQFNSITDYHSLMFDLGIIARRLRSASDRSKFYRLIEASLYGGISSAITRSLRDYLLPENSGVRKAFQDMEAALRENRMTLEAIRVTQSDRDLFKHLISEATNYVAADYMRHANERRVHLDKALEFRRELHTSRQQLAAEQYKHVDMARELAEHNGAEGDLEADYQAASDHLNLVQTALRQQEKIERYEADLDELQIRLEEQNEVVAEAIERQEENEARAEAAELEVDELKSQLADYQQALDVQQTRAIQYNQAIAALNRAKELCHLPDLTADSAAEWLETFQAKELEATEKMLSLEQKMSMAQTAHSQFEQAYQLVVAINGPLARNEAWDVARELLREGVDQRHLAEQVQPLRMRLSELEQRLREQQEAERLLADFCKRQGKNFDIDELEALHQELEARIASLSDSVSNAREERMALRQEQEQLQSRIQSLMQRAPVWLAAQNSLNQLSEQCGEEFTSSQDVTEYLQQLLEREREAIVERDEVGARKNAVDEEIERLSQPGGSEDQRLNALAERFGGVLLSEIYDDVSLEDAPYFSALYGPSRHAIVVPDLSQVTEHLEGLTDCPEDLYLIEGDPQSFDDSVFSVDELEKAVVVKIADRQWRYSRFPEVPLFGRAARESRIESLHAEREVLSERFATLSFDVQKTQRLHQAFSRFIGSHLAVAFESDPEAEIRQLNSRRVELERALSNHENDNQQQRIQFEQAKEGVTALNRILPRLNLLADDSLADRVDEIRERLDEAQEAARFVQQFGNQLAKLEPIVSVLQSDPEQFEQLKEDYAYSQQMQRDARQQAFALTEVVQRRAHFSYSDSAEMLSGNSDLNEKLRERLEQAEAERTRAREALRGHAAQLSQYNQVLASLKSSYDTKKELLNDLQRELQDIGVRADSGAEERARIRRDELHAQLSNNRSRRNQLEKALTFCEAEMDNLTRKLRKLERDYFEMREQVVTAKAGWCAVMRMVKDNGVERRLHRRELAYLSADDLRSMSDKALGALRLAVADNEHLRDVLRMSEDPKRPERKIQFFVAVYQHLRERIRQDIIRTDDPVEAIEQMEIELSRLTEELTSREQKLAISSRSVANIIRKTIQREQNRIRMLNQGLQNVSFGQVNSVRLNVNVRETHAMLLDVLSEQHEQHQDLFNSNRLTFSEALAKLYQRLNPQIDMGQRTPQTIGEELLDYRNYLEMEVEVNRGSDGWLRAESGALSTGEAIGTGMSILVMVVQSWEDESRRLRGKDISPCRLLFLDEAARLDARSIATLFELCERLQMQLIIAAPENISPEKGTTYKLVRKVFQNTEHVHVVGLRGFAPQLPETLPGTDEAPSQAS</sequence>
<accession>B1IW07</accession>
<reference key="1">
    <citation type="submission" date="2008-02" db="EMBL/GenBank/DDBJ databases">
        <title>Complete sequence of Escherichia coli C str. ATCC 8739.</title>
        <authorList>
            <person name="Copeland A."/>
            <person name="Lucas S."/>
            <person name="Lapidus A."/>
            <person name="Glavina del Rio T."/>
            <person name="Dalin E."/>
            <person name="Tice H."/>
            <person name="Bruce D."/>
            <person name="Goodwin L."/>
            <person name="Pitluck S."/>
            <person name="Kiss H."/>
            <person name="Brettin T."/>
            <person name="Detter J.C."/>
            <person name="Han C."/>
            <person name="Kuske C.R."/>
            <person name="Schmutz J."/>
            <person name="Larimer F."/>
            <person name="Land M."/>
            <person name="Hauser L."/>
            <person name="Kyrpides N."/>
            <person name="Mikhailova N."/>
            <person name="Ingram L."/>
            <person name="Richardson P."/>
        </authorList>
    </citation>
    <scope>NUCLEOTIDE SEQUENCE [LARGE SCALE GENOMIC DNA]</scope>
    <source>
        <strain>ATCC 8739 / DSM 1576 / NBRC 3972 / NCIMB 8545 / WDCM 00012 / Crooks</strain>
    </source>
</reference>
<gene>
    <name evidence="1" type="primary">mukB</name>
    <name type="ordered locus">EcolC_2672</name>
</gene>
<comment type="function">
    <text evidence="1">Plays a central role in chromosome condensation, segregation and cell cycle progression. Functions as a homodimer, which is essential for chromosome partition. Involved in negative DNA supercoiling in vivo, and by this means organize and compact chromosomes. May achieve or facilitate chromosome segregation by condensation DNA from both sides of a centrally located replisome during cell division.</text>
</comment>
<comment type="subunit">
    <text evidence="1">Homodimerization via its hinge domain. Binds to DNA via its C-terminal region. Interacts, and probably forms a ternary complex, with MukE and MukF via its C-terminal region. The complex formation is stimulated by calcium or magnesium. Interacts with tubulin-related protein FtsZ.</text>
</comment>
<comment type="subcellular location">
    <subcellularLocation>
        <location evidence="1">Cytoplasm</location>
        <location evidence="1">Nucleoid</location>
    </subcellularLocation>
    <text evidence="1">Restricted to the nucleoid region.</text>
</comment>
<comment type="domain">
    <text evidence="1">The hinge domain, which separates the large intramolecular coiled coil regions, allows the homodimerization, forming a V-shaped homodimer.</text>
</comment>
<comment type="similarity">
    <text evidence="1">Belongs to the SMC family. MukB subfamily.</text>
</comment>
<organism>
    <name type="scientific">Escherichia coli (strain ATCC 8739 / DSM 1576 / NBRC 3972 / NCIMB 8545 / WDCM 00012 / Crooks)</name>
    <dbReference type="NCBI Taxonomy" id="481805"/>
    <lineage>
        <taxon>Bacteria</taxon>
        <taxon>Pseudomonadati</taxon>
        <taxon>Pseudomonadota</taxon>
        <taxon>Gammaproteobacteria</taxon>
        <taxon>Enterobacterales</taxon>
        <taxon>Enterobacteriaceae</taxon>
        <taxon>Escherichia</taxon>
    </lineage>
</organism>
<proteinExistence type="inferred from homology"/>
<keyword id="KW-0067">ATP-binding</keyword>
<keyword id="KW-0131">Cell cycle</keyword>
<keyword id="KW-0132">Cell division</keyword>
<keyword id="KW-0159">Chromosome partition</keyword>
<keyword id="KW-0175">Coiled coil</keyword>
<keyword id="KW-0963">Cytoplasm</keyword>
<keyword id="KW-0226">DNA condensation</keyword>
<keyword id="KW-0238">DNA-binding</keyword>
<keyword id="KW-0547">Nucleotide-binding</keyword>